<accession>Q6ZQF7</accession>
<accession>Q3UHD5</accession>
<accession>Q6IE83</accession>
<feature type="chain" id="PRO_0000253533" description="E3 ubiquitin-protein ligase Jade-2">
    <location>
        <begin position="1"/>
        <end position="829"/>
    </location>
</feature>
<feature type="zinc finger region" description="PHD-type 1" evidence="2">
    <location>
        <begin position="199"/>
        <end position="249"/>
    </location>
</feature>
<feature type="zinc finger region" description="C2HC pre-PHD-type" evidence="3">
    <location>
        <begin position="251"/>
        <end position="285"/>
    </location>
</feature>
<feature type="zinc finger region" description="PHD-type 2" evidence="3">
    <location>
        <begin position="309"/>
        <end position="365"/>
    </location>
</feature>
<feature type="region of interest" description="Disordered" evidence="4">
    <location>
        <begin position="1"/>
        <end position="52"/>
    </location>
</feature>
<feature type="region of interest" description="Disordered" evidence="4">
    <location>
        <begin position="362"/>
        <end position="383"/>
    </location>
</feature>
<feature type="region of interest" description="Disordered" evidence="4">
    <location>
        <begin position="517"/>
        <end position="555"/>
    </location>
</feature>
<feature type="region of interest" description="Disordered" evidence="4">
    <location>
        <begin position="622"/>
        <end position="817"/>
    </location>
</feature>
<feature type="compositionally biased region" description="Polar residues" evidence="4">
    <location>
        <begin position="9"/>
        <end position="39"/>
    </location>
</feature>
<feature type="compositionally biased region" description="Basic residues" evidence="4">
    <location>
        <begin position="522"/>
        <end position="535"/>
    </location>
</feature>
<feature type="compositionally biased region" description="Basic and acidic residues" evidence="4">
    <location>
        <begin position="536"/>
        <end position="552"/>
    </location>
</feature>
<feature type="compositionally biased region" description="Basic residues" evidence="4">
    <location>
        <begin position="637"/>
        <end position="650"/>
    </location>
</feature>
<feature type="compositionally biased region" description="Basic and acidic residues" evidence="4">
    <location>
        <begin position="776"/>
        <end position="786"/>
    </location>
</feature>
<feature type="compositionally biased region" description="Acidic residues" evidence="4">
    <location>
        <begin position="792"/>
        <end position="806"/>
    </location>
</feature>
<feature type="modified residue" description="Phosphoserine" evidence="1">
    <location>
        <position position="9"/>
    </location>
</feature>
<feature type="modified residue" description="Phosphoserine" evidence="1">
    <location>
        <position position="15"/>
    </location>
</feature>
<feature type="modified residue" description="N6-acetyllysine" evidence="10">
    <location>
        <position position="32"/>
    </location>
</feature>
<feature type="modified residue" description="N6-acetyllysine" evidence="10">
    <location>
        <position position="38"/>
    </location>
</feature>
<feature type="modified residue" description="Phosphoserine" evidence="9">
    <location>
        <position position="117"/>
    </location>
</feature>
<feature type="modified residue" description="N6-acetyllysine" evidence="10">
    <location>
        <position position="298"/>
    </location>
</feature>
<feature type="splice variant" id="VSP_021052" description="In isoform 2." evidence="7">
    <original>V</original>
    <variation>VSWAARGGQAKASLFITTILFP</variation>
    <location>
        <position position="103"/>
    </location>
</feature>
<feature type="splice variant" id="VSP_021053" description="In isoform 2." evidence="7">
    <location>
        <begin position="518"/>
        <end position="561"/>
    </location>
</feature>
<gene>
    <name type="primary">Jade2</name>
    <name type="synonym">Kiaa0239</name>
    <name type="synonym">Phf15</name>
</gene>
<keyword id="KW-0007">Acetylation</keyword>
<keyword id="KW-0025">Alternative splicing</keyword>
<keyword id="KW-0479">Metal-binding</keyword>
<keyword id="KW-0597">Phosphoprotein</keyword>
<keyword id="KW-1185">Reference proteome</keyword>
<keyword id="KW-0677">Repeat</keyword>
<keyword id="KW-0808">Transferase</keyword>
<keyword id="KW-0833">Ubl conjugation pathway</keyword>
<keyword id="KW-0862">Zinc</keyword>
<keyword id="KW-0863">Zinc-finger</keyword>
<reference key="1">
    <citation type="journal article" date="2003" name="DNA Res.">
        <title>Prediction of the coding sequences of mouse homologues of KIAA gene: III. The complete nucleotide sequences of 500 mouse KIAA-homologous cDNAs identified by screening of terminal sequences of cDNA clones randomly sampled from size-fractionated libraries.</title>
        <authorList>
            <person name="Okazaki N."/>
            <person name="Kikuno R."/>
            <person name="Ohara R."/>
            <person name="Inamoto S."/>
            <person name="Koseki H."/>
            <person name="Hiraoka S."/>
            <person name="Saga Y."/>
            <person name="Nagase T."/>
            <person name="Ohara O."/>
            <person name="Koga H."/>
        </authorList>
    </citation>
    <scope>NUCLEOTIDE SEQUENCE [LARGE SCALE MRNA] (ISOFORM 1)</scope>
</reference>
<reference key="2">
    <citation type="journal article" date="2005" name="Science">
        <title>The transcriptional landscape of the mammalian genome.</title>
        <authorList>
            <person name="Carninci P."/>
            <person name="Kasukawa T."/>
            <person name="Katayama S."/>
            <person name="Gough J."/>
            <person name="Frith M.C."/>
            <person name="Maeda N."/>
            <person name="Oyama R."/>
            <person name="Ravasi T."/>
            <person name="Lenhard B."/>
            <person name="Wells C."/>
            <person name="Kodzius R."/>
            <person name="Shimokawa K."/>
            <person name="Bajic V.B."/>
            <person name="Brenner S.E."/>
            <person name="Batalov S."/>
            <person name="Forrest A.R."/>
            <person name="Zavolan M."/>
            <person name="Davis M.J."/>
            <person name="Wilming L.G."/>
            <person name="Aidinis V."/>
            <person name="Allen J.E."/>
            <person name="Ambesi-Impiombato A."/>
            <person name="Apweiler R."/>
            <person name="Aturaliya R.N."/>
            <person name="Bailey T.L."/>
            <person name="Bansal M."/>
            <person name="Baxter L."/>
            <person name="Beisel K.W."/>
            <person name="Bersano T."/>
            <person name="Bono H."/>
            <person name="Chalk A.M."/>
            <person name="Chiu K.P."/>
            <person name="Choudhary V."/>
            <person name="Christoffels A."/>
            <person name="Clutterbuck D.R."/>
            <person name="Crowe M.L."/>
            <person name="Dalla E."/>
            <person name="Dalrymple B.P."/>
            <person name="de Bono B."/>
            <person name="Della Gatta G."/>
            <person name="di Bernardo D."/>
            <person name="Down T."/>
            <person name="Engstrom P."/>
            <person name="Fagiolini M."/>
            <person name="Faulkner G."/>
            <person name="Fletcher C.F."/>
            <person name="Fukushima T."/>
            <person name="Furuno M."/>
            <person name="Futaki S."/>
            <person name="Gariboldi M."/>
            <person name="Georgii-Hemming P."/>
            <person name="Gingeras T.R."/>
            <person name="Gojobori T."/>
            <person name="Green R.E."/>
            <person name="Gustincich S."/>
            <person name="Harbers M."/>
            <person name="Hayashi Y."/>
            <person name="Hensch T.K."/>
            <person name="Hirokawa N."/>
            <person name="Hill D."/>
            <person name="Huminiecki L."/>
            <person name="Iacono M."/>
            <person name="Ikeo K."/>
            <person name="Iwama A."/>
            <person name="Ishikawa T."/>
            <person name="Jakt M."/>
            <person name="Kanapin A."/>
            <person name="Katoh M."/>
            <person name="Kawasawa Y."/>
            <person name="Kelso J."/>
            <person name="Kitamura H."/>
            <person name="Kitano H."/>
            <person name="Kollias G."/>
            <person name="Krishnan S.P."/>
            <person name="Kruger A."/>
            <person name="Kummerfeld S.K."/>
            <person name="Kurochkin I.V."/>
            <person name="Lareau L.F."/>
            <person name="Lazarevic D."/>
            <person name="Lipovich L."/>
            <person name="Liu J."/>
            <person name="Liuni S."/>
            <person name="McWilliam S."/>
            <person name="Madan Babu M."/>
            <person name="Madera M."/>
            <person name="Marchionni L."/>
            <person name="Matsuda H."/>
            <person name="Matsuzawa S."/>
            <person name="Miki H."/>
            <person name="Mignone F."/>
            <person name="Miyake S."/>
            <person name="Morris K."/>
            <person name="Mottagui-Tabar S."/>
            <person name="Mulder N."/>
            <person name="Nakano N."/>
            <person name="Nakauchi H."/>
            <person name="Ng P."/>
            <person name="Nilsson R."/>
            <person name="Nishiguchi S."/>
            <person name="Nishikawa S."/>
            <person name="Nori F."/>
            <person name="Ohara O."/>
            <person name="Okazaki Y."/>
            <person name="Orlando V."/>
            <person name="Pang K.C."/>
            <person name="Pavan W.J."/>
            <person name="Pavesi G."/>
            <person name="Pesole G."/>
            <person name="Petrovsky N."/>
            <person name="Piazza S."/>
            <person name="Reed J."/>
            <person name="Reid J.F."/>
            <person name="Ring B.Z."/>
            <person name="Ringwald M."/>
            <person name="Rost B."/>
            <person name="Ruan Y."/>
            <person name="Salzberg S.L."/>
            <person name="Sandelin A."/>
            <person name="Schneider C."/>
            <person name="Schoenbach C."/>
            <person name="Sekiguchi K."/>
            <person name="Semple C.A."/>
            <person name="Seno S."/>
            <person name="Sessa L."/>
            <person name="Sheng Y."/>
            <person name="Shibata Y."/>
            <person name="Shimada H."/>
            <person name="Shimada K."/>
            <person name="Silva D."/>
            <person name="Sinclair B."/>
            <person name="Sperling S."/>
            <person name="Stupka E."/>
            <person name="Sugiura K."/>
            <person name="Sultana R."/>
            <person name="Takenaka Y."/>
            <person name="Taki K."/>
            <person name="Tammoja K."/>
            <person name="Tan S.L."/>
            <person name="Tang S."/>
            <person name="Taylor M.S."/>
            <person name="Tegner J."/>
            <person name="Teichmann S.A."/>
            <person name="Ueda H.R."/>
            <person name="van Nimwegen E."/>
            <person name="Verardo R."/>
            <person name="Wei C.L."/>
            <person name="Yagi K."/>
            <person name="Yamanishi H."/>
            <person name="Zabarovsky E."/>
            <person name="Zhu S."/>
            <person name="Zimmer A."/>
            <person name="Hide W."/>
            <person name="Bult C."/>
            <person name="Grimmond S.M."/>
            <person name="Teasdale R.D."/>
            <person name="Liu E.T."/>
            <person name="Brusic V."/>
            <person name="Quackenbush J."/>
            <person name="Wahlestedt C."/>
            <person name="Mattick J.S."/>
            <person name="Hume D.A."/>
            <person name="Kai C."/>
            <person name="Sasaki D."/>
            <person name="Tomaru Y."/>
            <person name="Fukuda S."/>
            <person name="Kanamori-Katayama M."/>
            <person name="Suzuki M."/>
            <person name="Aoki J."/>
            <person name="Arakawa T."/>
            <person name="Iida J."/>
            <person name="Imamura K."/>
            <person name="Itoh M."/>
            <person name="Kato T."/>
            <person name="Kawaji H."/>
            <person name="Kawagashira N."/>
            <person name="Kawashima T."/>
            <person name="Kojima M."/>
            <person name="Kondo S."/>
            <person name="Konno H."/>
            <person name="Nakano K."/>
            <person name="Ninomiya N."/>
            <person name="Nishio T."/>
            <person name="Okada M."/>
            <person name="Plessy C."/>
            <person name="Shibata K."/>
            <person name="Shiraki T."/>
            <person name="Suzuki S."/>
            <person name="Tagami M."/>
            <person name="Waki K."/>
            <person name="Watahiki A."/>
            <person name="Okamura-Oho Y."/>
            <person name="Suzuki H."/>
            <person name="Kawai J."/>
            <person name="Hayashizaki Y."/>
        </authorList>
    </citation>
    <scope>NUCLEOTIDE SEQUENCE [LARGE SCALE MRNA] (ISOFORM 1)</scope>
    <source>
        <strain>C57BL/6J</strain>
        <tissue>Brain</tissue>
    </source>
</reference>
<reference key="3">
    <citation type="journal article" date="2004" name="Genome Res.">
        <title>The status, quality, and expansion of the NIH full-length cDNA project: the Mammalian Gene Collection (MGC).</title>
        <authorList>
            <consortium name="The MGC Project Team"/>
        </authorList>
    </citation>
    <scope>NUCLEOTIDE SEQUENCE [LARGE SCALE MRNA] (ISOFORM 1)</scope>
</reference>
<reference key="4">
    <citation type="journal article" date="2003" name="Mol. Cell. Biol.">
        <title>Identification of Jade1, a gene encoding a PHD zinc finger protein, in a gene trap mutagenesis screen for genes involved in anteroposterior axis development.</title>
        <authorList>
            <person name="Tzouanacou E."/>
            <person name="Tweedie S."/>
            <person name="Wilson V."/>
        </authorList>
    </citation>
    <scope>IDENTIFICATION (ISOFORM 2)</scope>
    <source>
        <strain>C57BL/6J</strain>
    </source>
</reference>
<reference key="5">
    <citation type="journal article" date="2010" name="Cell">
        <title>A tissue-specific atlas of mouse protein phosphorylation and expression.</title>
        <authorList>
            <person name="Huttlin E.L."/>
            <person name="Jedrychowski M.P."/>
            <person name="Elias J.E."/>
            <person name="Goswami T."/>
            <person name="Rad R."/>
            <person name="Beausoleil S.A."/>
            <person name="Villen J."/>
            <person name="Haas W."/>
            <person name="Sowa M.E."/>
            <person name="Gygi S.P."/>
        </authorList>
    </citation>
    <scope>PHOSPHORYLATION [LARGE SCALE ANALYSIS] AT SER-117</scope>
    <scope>IDENTIFICATION BY MASS SPECTROMETRY [LARGE SCALE ANALYSIS]</scope>
    <source>
        <tissue>Spleen</tissue>
    </source>
</reference>
<reference key="6">
    <citation type="journal article" date="2013" name="Mol. Cell">
        <title>SIRT5-mediated lysine desuccinylation impacts diverse metabolic pathways.</title>
        <authorList>
            <person name="Park J."/>
            <person name="Chen Y."/>
            <person name="Tishkoff D.X."/>
            <person name="Peng C."/>
            <person name="Tan M."/>
            <person name="Dai L."/>
            <person name="Xie Z."/>
            <person name="Zhang Y."/>
            <person name="Zwaans B.M."/>
            <person name="Skinner M.E."/>
            <person name="Lombard D.B."/>
            <person name="Zhao Y."/>
        </authorList>
    </citation>
    <scope>ACETYLATION [LARGE SCALE ANALYSIS] AT LYS-32; LYS-38 AND LYS-298</scope>
    <scope>IDENTIFICATION BY MASS SPECTROMETRY [LARGE SCALE ANALYSIS]</scope>
    <source>
        <tissue>Embryonic fibroblast</tissue>
    </source>
</reference>
<reference key="7">
    <citation type="journal article" date="2014" name="Mol. Cell">
        <title>Destabilizing LSD1 by Jade-2 promotes neurogenesis: an antibraking system in neural development.</title>
        <authorList>
            <person name="Han X."/>
            <person name="Gui B."/>
            <person name="Xiong C."/>
            <person name="Zhao L."/>
            <person name="Liang J."/>
            <person name="Sun L."/>
            <person name="Yang X."/>
            <person name="Yu W."/>
            <person name="Si W."/>
            <person name="Yan R."/>
            <person name="Yi X."/>
            <person name="Zhang D."/>
            <person name="Li W."/>
            <person name="Li L."/>
            <person name="Yang J."/>
            <person name="Wang Y."/>
            <person name="Sun Y.E."/>
            <person name="Zhang D."/>
            <person name="Meng A."/>
            <person name="Shang Y."/>
        </authorList>
    </citation>
    <scope>FUNCTION</scope>
    <scope>CATALYTIC ACTIVITY</scope>
    <scope>INTERACTION WITH KDM1A</scope>
    <scope>DISRUPTION PHENOTYPE</scope>
</reference>
<dbReference type="EC" id="2.3.2.27" evidence="5"/>
<dbReference type="EMBL" id="AK129097">
    <property type="protein sequence ID" value="BAC97907.1"/>
    <property type="status" value="ALT_INIT"/>
    <property type="molecule type" value="mRNA"/>
</dbReference>
<dbReference type="EMBL" id="AK147453">
    <property type="protein sequence ID" value="BAE27922.1"/>
    <property type="molecule type" value="mRNA"/>
</dbReference>
<dbReference type="EMBL" id="BC117856">
    <property type="protein sequence ID" value="AAI17857.1"/>
    <property type="molecule type" value="mRNA"/>
</dbReference>
<dbReference type="EMBL" id="BC117857">
    <property type="protein sequence ID" value="AAI17858.1"/>
    <property type="molecule type" value="mRNA"/>
</dbReference>
<dbReference type="EMBL" id="BN000285">
    <property type="protein sequence ID" value="CAE30498.1"/>
    <property type="molecule type" value="mRNA"/>
</dbReference>
<dbReference type="CCDS" id="CCDS24662.1">
    <molecule id="Q6ZQF7-1"/>
</dbReference>
<dbReference type="RefSeq" id="NP_955003.2">
    <molecule id="Q6ZQF7-1"/>
    <property type="nucleotide sequence ID" value="NM_199299.5"/>
</dbReference>
<dbReference type="RefSeq" id="XP_006534532.1">
    <molecule id="Q6ZQF7-1"/>
    <property type="nucleotide sequence ID" value="XM_006534469.5"/>
</dbReference>
<dbReference type="RefSeq" id="XP_006534533.1">
    <molecule id="Q6ZQF7-1"/>
    <property type="nucleotide sequence ID" value="XM_006534470.5"/>
</dbReference>
<dbReference type="RefSeq" id="XP_011247611.1">
    <molecule id="Q6ZQF7-1"/>
    <property type="nucleotide sequence ID" value="XM_011249309.3"/>
</dbReference>
<dbReference type="RefSeq" id="XP_017170321.1">
    <property type="nucleotide sequence ID" value="XM_017314832.1"/>
</dbReference>
<dbReference type="RefSeq" id="XP_036012980.1">
    <molecule id="Q6ZQF7-1"/>
    <property type="nucleotide sequence ID" value="XM_036157087.1"/>
</dbReference>
<dbReference type="RefSeq" id="XP_036012981.1">
    <molecule id="Q6ZQF7-1"/>
    <property type="nucleotide sequence ID" value="XM_036157088.1"/>
</dbReference>
<dbReference type="SMR" id="Q6ZQF7"/>
<dbReference type="BioGRID" id="218388">
    <property type="interactions" value="4"/>
</dbReference>
<dbReference type="ComplexPortal" id="CPX-795">
    <property type="entry name" value="HBO1-4.2 histone acetyltransferase complex"/>
</dbReference>
<dbReference type="ComplexPortal" id="CPX-798">
    <property type="entry name" value="HBO1-5.2 histone acetyltransferase complex"/>
</dbReference>
<dbReference type="FunCoup" id="Q6ZQF7">
    <property type="interactions" value="1110"/>
</dbReference>
<dbReference type="STRING" id="10090.ENSMUSP00000020655"/>
<dbReference type="GlyGen" id="Q6ZQF7">
    <property type="glycosylation" value="1 site"/>
</dbReference>
<dbReference type="iPTMnet" id="Q6ZQF7"/>
<dbReference type="PhosphoSitePlus" id="Q6ZQF7"/>
<dbReference type="jPOST" id="Q6ZQF7"/>
<dbReference type="PaxDb" id="10090-ENSMUSP00000020655"/>
<dbReference type="ProteomicsDB" id="269024">
    <molecule id="Q6ZQF7-1"/>
</dbReference>
<dbReference type="ProteomicsDB" id="269025">
    <molecule id="Q6ZQF7-2"/>
</dbReference>
<dbReference type="Antibodypedia" id="14678">
    <property type="antibodies" value="48 antibodies from 12 providers"/>
</dbReference>
<dbReference type="DNASU" id="76901"/>
<dbReference type="Ensembl" id="ENSMUST00000020655.14">
    <molecule id="Q6ZQF7-1"/>
    <property type="protein sequence ID" value="ENSMUSP00000020655.8"/>
    <property type="gene ID" value="ENSMUSG00000020387.16"/>
</dbReference>
<dbReference type="Ensembl" id="ENSMUST00000109091.2">
    <molecule id="Q6ZQF7-1"/>
    <property type="protein sequence ID" value="ENSMUSP00000104719.2"/>
    <property type="gene ID" value="ENSMUSG00000020387.16"/>
</dbReference>
<dbReference type="GeneID" id="76901"/>
<dbReference type="KEGG" id="mmu:76901"/>
<dbReference type="UCSC" id="uc007iuq.1">
    <molecule id="Q6ZQF7-1"/>
    <property type="organism name" value="mouse"/>
</dbReference>
<dbReference type="AGR" id="MGI:1924151"/>
<dbReference type="CTD" id="23338"/>
<dbReference type="MGI" id="MGI:1924151">
    <property type="gene designation" value="Jade2"/>
</dbReference>
<dbReference type="VEuPathDB" id="HostDB:ENSMUSG00000020387"/>
<dbReference type="eggNOG" id="KOG0954">
    <property type="taxonomic scope" value="Eukaryota"/>
</dbReference>
<dbReference type="GeneTree" id="ENSGT00940000158570"/>
<dbReference type="HOGENOM" id="CLU_016215_2_0_1"/>
<dbReference type="InParanoid" id="Q6ZQF7"/>
<dbReference type="OMA" id="SMASCIT"/>
<dbReference type="OrthoDB" id="20839at2759"/>
<dbReference type="PhylomeDB" id="Q6ZQF7"/>
<dbReference type="TreeFam" id="TF316118"/>
<dbReference type="Reactome" id="R-MMU-3214847">
    <property type="pathway name" value="HATs acetylate histones"/>
</dbReference>
<dbReference type="UniPathway" id="UPA00143"/>
<dbReference type="BioGRID-ORCS" id="76901">
    <property type="hits" value="3 hits in 80 CRISPR screens"/>
</dbReference>
<dbReference type="ChiTaRS" id="Jade2">
    <property type="organism name" value="mouse"/>
</dbReference>
<dbReference type="PRO" id="PR:Q6ZQF7"/>
<dbReference type="Proteomes" id="UP000000589">
    <property type="component" value="Chromosome 11"/>
</dbReference>
<dbReference type="RNAct" id="Q6ZQF7">
    <property type="molecule type" value="protein"/>
</dbReference>
<dbReference type="Bgee" id="ENSMUSG00000020387">
    <property type="expression patterns" value="Expressed in primary oocyte and 196 other cell types or tissues"/>
</dbReference>
<dbReference type="ExpressionAtlas" id="Q6ZQF7">
    <property type="expression patterns" value="baseline and differential"/>
</dbReference>
<dbReference type="GO" id="GO:0000123">
    <property type="term" value="C:histone acetyltransferase complex"/>
    <property type="evidence" value="ECO:0000266"/>
    <property type="project" value="ComplexPortal"/>
</dbReference>
<dbReference type="GO" id="GO:0005654">
    <property type="term" value="C:nucleoplasm"/>
    <property type="evidence" value="ECO:0000266"/>
    <property type="project" value="ComplexPortal"/>
</dbReference>
<dbReference type="GO" id="GO:0043997">
    <property type="term" value="F:histone H4K12 acetyltransferase activity"/>
    <property type="evidence" value="ECO:0000250"/>
    <property type="project" value="UniProtKB"/>
</dbReference>
<dbReference type="GO" id="GO:0043995">
    <property type="term" value="F:histone H4K5 acetyltransferase activity"/>
    <property type="evidence" value="ECO:0000250"/>
    <property type="project" value="UniProtKB"/>
</dbReference>
<dbReference type="GO" id="GO:0043996">
    <property type="term" value="F:histone H4K8 acetyltransferase activity"/>
    <property type="evidence" value="ECO:0000250"/>
    <property type="project" value="UniProtKB"/>
</dbReference>
<dbReference type="GO" id="GO:0061630">
    <property type="term" value="F:ubiquitin protein ligase activity"/>
    <property type="evidence" value="ECO:0000314"/>
    <property type="project" value="MGI"/>
</dbReference>
<dbReference type="GO" id="GO:0008270">
    <property type="term" value="F:zinc ion binding"/>
    <property type="evidence" value="ECO:0007669"/>
    <property type="project" value="UniProtKB-KW"/>
</dbReference>
<dbReference type="GO" id="GO:1990138">
    <property type="term" value="P:neuron projection extension"/>
    <property type="evidence" value="ECO:0000316"/>
    <property type="project" value="MGI"/>
</dbReference>
<dbReference type="GO" id="GO:0050769">
    <property type="term" value="P:positive regulation of neurogenesis"/>
    <property type="evidence" value="ECO:0000314"/>
    <property type="project" value="MGI"/>
</dbReference>
<dbReference type="GO" id="GO:0051865">
    <property type="term" value="P:protein autoubiquitination"/>
    <property type="evidence" value="ECO:0000314"/>
    <property type="project" value="MGI"/>
</dbReference>
<dbReference type="GO" id="GO:0000209">
    <property type="term" value="P:protein polyubiquitination"/>
    <property type="evidence" value="ECO:0000314"/>
    <property type="project" value="MGI"/>
</dbReference>
<dbReference type="GO" id="GO:0051726">
    <property type="term" value="P:regulation of cell cycle"/>
    <property type="evidence" value="ECO:0000266"/>
    <property type="project" value="ComplexPortal"/>
</dbReference>
<dbReference type="GO" id="GO:0001558">
    <property type="term" value="P:regulation of cell growth"/>
    <property type="evidence" value="ECO:0000250"/>
    <property type="project" value="ComplexPortal"/>
</dbReference>
<dbReference type="GO" id="GO:2000278">
    <property type="term" value="P:regulation of DNA biosynthetic process"/>
    <property type="evidence" value="ECO:0000266"/>
    <property type="project" value="ComplexPortal"/>
</dbReference>
<dbReference type="GO" id="GO:0006275">
    <property type="term" value="P:regulation of DNA replication"/>
    <property type="evidence" value="ECO:0000266"/>
    <property type="project" value="ComplexPortal"/>
</dbReference>
<dbReference type="GO" id="GO:0006355">
    <property type="term" value="P:regulation of DNA-templated transcription"/>
    <property type="evidence" value="ECO:0000250"/>
    <property type="project" value="ComplexPortal"/>
</dbReference>
<dbReference type="GO" id="GO:0050767">
    <property type="term" value="P:regulation of neurogenesis"/>
    <property type="evidence" value="ECO:0000316"/>
    <property type="project" value="MGI"/>
</dbReference>
<dbReference type="CDD" id="cd15705">
    <property type="entry name" value="ePHD_JADE2"/>
    <property type="match status" value="1"/>
</dbReference>
<dbReference type="CDD" id="cd15680">
    <property type="entry name" value="PHD_JADE2"/>
    <property type="match status" value="1"/>
</dbReference>
<dbReference type="FunFam" id="3.30.40.10:FF:000004">
    <property type="entry name" value="Jade family PHD finger 2"/>
    <property type="match status" value="1"/>
</dbReference>
<dbReference type="FunFam" id="3.30.40.10:FF:000030">
    <property type="entry name" value="Protein Jade-1 isoform 1"/>
    <property type="match status" value="1"/>
</dbReference>
<dbReference type="Gene3D" id="3.30.40.10">
    <property type="entry name" value="Zinc/RING finger domain, C3HC4 (zinc finger)"/>
    <property type="match status" value="2"/>
</dbReference>
<dbReference type="InterPro" id="IPR019542">
    <property type="entry name" value="Enhancer_polycomb-like_N"/>
</dbReference>
<dbReference type="InterPro" id="IPR034732">
    <property type="entry name" value="EPHD"/>
</dbReference>
<dbReference type="InterPro" id="IPR050701">
    <property type="entry name" value="Histone_Mod_Regulator"/>
</dbReference>
<dbReference type="InterPro" id="IPR039549">
    <property type="entry name" value="JADE2_ePHD"/>
</dbReference>
<dbReference type="InterPro" id="IPR039548">
    <property type="entry name" value="JADE2_PHD"/>
</dbReference>
<dbReference type="InterPro" id="IPR019786">
    <property type="entry name" value="Zinc_finger_PHD-type_CS"/>
</dbReference>
<dbReference type="InterPro" id="IPR011011">
    <property type="entry name" value="Znf_FYVE_PHD"/>
</dbReference>
<dbReference type="InterPro" id="IPR001965">
    <property type="entry name" value="Znf_PHD"/>
</dbReference>
<dbReference type="InterPro" id="IPR019787">
    <property type="entry name" value="Znf_PHD-finger"/>
</dbReference>
<dbReference type="InterPro" id="IPR013083">
    <property type="entry name" value="Znf_RING/FYVE/PHD"/>
</dbReference>
<dbReference type="PANTHER" id="PTHR13793:SF84">
    <property type="entry name" value="E3 UBIQUITIN-PROTEIN LIGASE JADE-2"/>
    <property type="match status" value="1"/>
</dbReference>
<dbReference type="PANTHER" id="PTHR13793">
    <property type="entry name" value="PHD FINGER PROTEINS"/>
    <property type="match status" value="1"/>
</dbReference>
<dbReference type="Pfam" id="PF10513">
    <property type="entry name" value="EPL1"/>
    <property type="match status" value="1"/>
</dbReference>
<dbReference type="Pfam" id="PF13831">
    <property type="entry name" value="PHD_2"/>
    <property type="match status" value="1"/>
</dbReference>
<dbReference type="Pfam" id="PF13832">
    <property type="entry name" value="zf-HC5HC2H_2"/>
    <property type="match status" value="1"/>
</dbReference>
<dbReference type="SMART" id="SM00249">
    <property type="entry name" value="PHD"/>
    <property type="match status" value="2"/>
</dbReference>
<dbReference type="SUPFAM" id="SSF57903">
    <property type="entry name" value="FYVE/PHD zinc finger"/>
    <property type="match status" value="1"/>
</dbReference>
<dbReference type="PROSITE" id="PS51805">
    <property type="entry name" value="EPHD"/>
    <property type="match status" value="1"/>
</dbReference>
<dbReference type="PROSITE" id="PS01359">
    <property type="entry name" value="ZF_PHD_1"/>
    <property type="match status" value="1"/>
</dbReference>
<dbReference type="PROSITE" id="PS50016">
    <property type="entry name" value="ZF_PHD_2"/>
    <property type="match status" value="1"/>
</dbReference>
<organism>
    <name type="scientific">Mus musculus</name>
    <name type="common">Mouse</name>
    <dbReference type="NCBI Taxonomy" id="10090"/>
    <lineage>
        <taxon>Eukaryota</taxon>
        <taxon>Metazoa</taxon>
        <taxon>Chordata</taxon>
        <taxon>Craniata</taxon>
        <taxon>Vertebrata</taxon>
        <taxon>Euteleostomi</taxon>
        <taxon>Mammalia</taxon>
        <taxon>Eutheria</taxon>
        <taxon>Euarchontoglires</taxon>
        <taxon>Glires</taxon>
        <taxon>Rodentia</taxon>
        <taxon>Myomorpha</taxon>
        <taxon>Muroidea</taxon>
        <taxon>Muridae</taxon>
        <taxon>Murinae</taxon>
        <taxon>Mus</taxon>
        <taxon>Mus</taxon>
    </lineage>
</organism>
<evidence type="ECO:0000250" key="1">
    <source>
        <dbReference type="UniProtKB" id="Q9NQC1"/>
    </source>
</evidence>
<evidence type="ECO:0000255" key="2">
    <source>
        <dbReference type="PROSITE-ProRule" id="PRU00146"/>
    </source>
</evidence>
<evidence type="ECO:0000255" key="3">
    <source>
        <dbReference type="PROSITE-ProRule" id="PRU01146"/>
    </source>
</evidence>
<evidence type="ECO:0000256" key="4">
    <source>
        <dbReference type="SAM" id="MobiDB-lite"/>
    </source>
</evidence>
<evidence type="ECO:0000269" key="5">
    <source>
    </source>
</evidence>
<evidence type="ECO:0000303" key="6">
    <source>
    </source>
</evidence>
<evidence type="ECO:0000305" key="7"/>
<evidence type="ECO:0000305" key="8">
    <source>
    </source>
</evidence>
<evidence type="ECO:0007744" key="9">
    <source>
    </source>
</evidence>
<evidence type="ECO:0007744" key="10">
    <source>
    </source>
</evidence>
<sequence length="829" mass="92174">MEEKRRKYSISSDNSDTTDGHVTSTSASRCSKLPSSTKSGWPRQNEKKPSEVFRTDLITAMKIPDSYQLSPDDYYILADPWRQEWEKGVQVPAGAEAIPEPVVRLLPPLKGPPTQMSPDSPTLGEGAHPDWPGGSRYDLDEIDAYWLELLNSELKEMEKPELDELTLERVLEELETLCHQNMAQAIETQEGLGIEYDEDVVCDVCRSPEGEDGNEMVFCDKCNVCVHQACYGILKVPTGSWLCRTCALGVQPKCLLCPKRGGALKPTRSGTKWVHVSCALWIPEVSIGCPEKMEPITKISHIPASRWALSCSLCKECTGTCIQCSMPSCITAFHVTCAFDRGLEMRTILADNDEVKFKSLCQEHSDGGPRSEPTSEPVEPSQAVEDLEKVTLRKQRLQQLEENFYELVEPAEVAERLDLAEALVDFIYQYWKLKRRANANQPLLTPKTDEVDNLAQQEQDVLYRRLKLFTHLRQDLERVRNLCYMVTRRERTKHTICKLQEQIFHLQMKLIEQDLCREPSGRRSKGKKNDSKRKGREGPKGSSPEKKEKVKAGPESVLGQLGLSTSFPIDGTFFNSWLAQSVQITAEDMAMSEWSLNSGHREDPAPGLLSEELLQDEETLLSFMRDPSLRPGDPARKARGRTRLPAKKKPSPLQDGPSARTTPDKQPKKAWAQDGKGTQGPPMRKPPRRTSSHLPSSPAAGDCPVPATLESPPPLASEILDKTAPMASDLNVQVPGPTVSPKPLGRLRPPREMKVSRKSPGARSDAGTGLPSAVAERPKVSLHFDTEADGYFSDEEMSDSEVEAEDSGVQRASREAGAEEVVRMGVLAS</sequence>
<proteinExistence type="evidence at protein level"/>
<comment type="function">
    <text evidence="1 5">Scaffold subunit of some HBO1 complexes, which have a histone H4 acetyltransferase activity (By similarity). Acts as a E3 ubiquitin-protein ligase mediating the ubiquitination and subsequent proteasomal degradation of target protein histone demethylase KDM1A (PubMed:25018020). Also acts as a ubiquitin ligase E3 toward itself (PubMed:25018020). Positive regulator of neurogenesis (PubMed:25018020).</text>
</comment>
<comment type="catalytic activity">
    <reaction evidence="5">
        <text>S-ubiquitinyl-[E2 ubiquitin-conjugating enzyme]-L-cysteine + [acceptor protein]-L-lysine = [E2 ubiquitin-conjugating enzyme]-L-cysteine + N(6)-ubiquitinyl-[acceptor protein]-L-lysine.</text>
        <dbReference type="EC" id="2.3.2.27"/>
    </reaction>
</comment>
<comment type="pathway">
    <text evidence="8">Protein modification; protein ubiquitination.</text>
</comment>
<comment type="subunit">
    <text evidence="1 5">Component of the HBO1 complex composed at least of ING4 or ING5, MYST2/HBO1, MEAF6, and one of JADE1, JADE2 and JADE3 (By similarity). Interacts (via C-terminus) with KDM1A (via AOD/Tower domain) (PubMed:25018020).</text>
</comment>
<comment type="alternative products">
    <event type="alternative splicing"/>
    <isoform>
        <id>Q6ZQF7-1</id>
        <name>1</name>
        <sequence type="displayed"/>
    </isoform>
    <isoform>
        <id>Q6ZQF7-2</id>
        <name>2</name>
        <sequence type="described" ref="VSP_021052 VSP_021053"/>
    </isoform>
</comment>
<comment type="domain">
    <text evidence="1">The first PHD domain is essential for its E3 ubiquitin ligase activity.</text>
</comment>
<comment type="disruption phenotype">
    <text evidence="5">Strongly decreased level of KDM1A polyubiquitination resulting in increased level of KDM1A protein. Decelerated emergence of neural progenitors and mature neurons. Embryonic stem cells grow in aggregates with smoother-edged, rounder-shaped cell clones and fail to organize in rosettes with surrounding cells exhibiting neuronal morphology with extensive arborization. Decreased expression of neural markers.</text>
</comment>
<comment type="similarity">
    <text evidence="7">Belongs to the JADE family.</text>
</comment>
<comment type="sequence caution" evidence="7">
    <conflict type="erroneous initiation">
        <sequence resource="EMBL-CDS" id="BAC97907"/>
    </conflict>
    <text>Extended N-terminus.</text>
</comment>
<protein>
    <recommendedName>
        <fullName evidence="6">E3 ubiquitin-protein ligase Jade-2</fullName>
        <ecNumber evidence="5">2.3.2.27</ecNumber>
    </recommendedName>
    <alternativeName>
        <fullName>Jade family PHD finger protein 2</fullName>
    </alternativeName>
    <alternativeName>
        <fullName>PHD finger protein 15</fullName>
    </alternativeName>
</protein>
<name>JADE2_MOUSE</name>